<reference key="1">
    <citation type="journal article" date="1996" name="Arch. Biochem. Biophys.">
        <title>Isolation and characterization of two distinct growth hormone cDNAs from the goldfish, Carassius auratus.</title>
        <authorList>
            <person name="Law M.S."/>
            <person name="Cheng K.W."/>
            <person name="Fung T.K."/>
            <person name="Chan Y.H."/>
            <person name="Yu K.L."/>
            <person name="Chan K.M."/>
        </authorList>
    </citation>
    <scope>NUCLEOTIDE SEQUENCE [MRNA]</scope>
</reference>
<sequence length="210" mass="23767">MARALVLLSVVLVSLLVNQGRASDNQRLFNNAVIRVQHLHQLAAKMINDFEDSLLPEERRQLSKIFPLSFCNSDYIEAPTGKDETQKSSMLKLLRISFRLIESWEYPSQTLSGTVSNSLTAGNPNQITEKLADLKMGINVLIKGSLDGQPNIDDNDSLPLPFEDFYLTMGENNLRESFRLLACFKKDMHKVETYLRVANCRRSLDSNCTL</sequence>
<proteinExistence type="evidence at transcript level"/>
<comment type="function">
    <text>Growth hormone plays an important role in growth control and is involved in the regulation of several anabolic processes. Implicated as an osmoregulatory substance important for seawater adaptation.</text>
</comment>
<comment type="subcellular location">
    <subcellularLocation>
        <location>Secreted</location>
    </subcellularLocation>
</comment>
<comment type="similarity">
    <text evidence="2">Belongs to the somatotropin/prolactin family.</text>
</comment>
<feature type="signal peptide" evidence="1">
    <location>
        <begin position="1"/>
        <end position="22"/>
    </location>
</feature>
<feature type="chain" id="PRO_0000033015" description="Somatotropin-2">
    <location>
        <begin position="23"/>
        <end position="210"/>
    </location>
</feature>
<feature type="binding site" evidence="1">
    <location>
        <position position="38"/>
    </location>
    <ligand>
        <name>Zn(2+)</name>
        <dbReference type="ChEBI" id="CHEBI:29105"/>
    </ligand>
</feature>
<feature type="binding site" evidence="1">
    <location>
        <position position="192"/>
    </location>
    <ligand>
        <name>Zn(2+)</name>
        <dbReference type="ChEBI" id="CHEBI:29105"/>
    </ligand>
</feature>
<feature type="disulfide bond" evidence="1">
    <location>
        <begin position="71"/>
        <end position="183"/>
    </location>
</feature>
<feature type="disulfide bond" evidence="1">
    <location>
        <begin position="200"/>
        <end position="208"/>
    </location>
</feature>
<organism>
    <name type="scientific">Carassius auratus</name>
    <name type="common">Goldfish</name>
    <dbReference type="NCBI Taxonomy" id="7957"/>
    <lineage>
        <taxon>Eukaryota</taxon>
        <taxon>Metazoa</taxon>
        <taxon>Chordata</taxon>
        <taxon>Craniata</taxon>
        <taxon>Vertebrata</taxon>
        <taxon>Euteleostomi</taxon>
        <taxon>Actinopterygii</taxon>
        <taxon>Neopterygii</taxon>
        <taxon>Teleostei</taxon>
        <taxon>Ostariophysi</taxon>
        <taxon>Cypriniformes</taxon>
        <taxon>Cyprinidae</taxon>
        <taxon>Cyprininae</taxon>
        <taxon>Carassius</taxon>
    </lineage>
</organism>
<name>SOMA2_CARAU</name>
<accession>O93360</accession>
<dbReference type="EMBL" id="AF069399">
    <property type="protein sequence ID" value="AAC19390.1"/>
    <property type="molecule type" value="mRNA"/>
</dbReference>
<dbReference type="PIR" id="S69263">
    <property type="entry name" value="S69263"/>
</dbReference>
<dbReference type="SMR" id="O93360"/>
<dbReference type="OrthoDB" id="9925773at2759"/>
<dbReference type="Proteomes" id="UP000515129">
    <property type="component" value="Unplaced"/>
</dbReference>
<dbReference type="GO" id="GO:0005615">
    <property type="term" value="C:extracellular space"/>
    <property type="evidence" value="ECO:0007669"/>
    <property type="project" value="InterPro"/>
</dbReference>
<dbReference type="GO" id="GO:0070186">
    <property type="term" value="F:growth hormone activity"/>
    <property type="evidence" value="ECO:0007669"/>
    <property type="project" value="TreeGrafter"/>
</dbReference>
<dbReference type="GO" id="GO:0005131">
    <property type="term" value="F:growth hormone receptor binding"/>
    <property type="evidence" value="ECO:0007669"/>
    <property type="project" value="InterPro"/>
</dbReference>
<dbReference type="GO" id="GO:0046872">
    <property type="term" value="F:metal ion binding"/>
    <property type="evidence" value="ECO:0007669"/>
    <property type="project" value="UniProtKB-KW"/>
</dbReference>
<dbReference type="GO" id="GO:0048513">
    <property type="term" value="P:animal organ development"/>
    <property type="evidence" value="ECO:0007669"/>
    <property type="project" value="TreeGrafter"/>
</dbReference>
<dbReference type="GO" id="GO:0060396">
    <property type="term" value="P:growth hormone receptor signaling pathway"/>
    <property type="evidence" value="ECO:0007669"/>
    <property type="project" value="TreeGrafter"/>
</dbReference>
<dbReference type="GO" id="GO:0045927">
    <property type="term" value="P:positive regulation of growth"/>
    <property type="evidence" value="ECO:0007669"/>
    <property type="project" value="TreeGrafter"/>
</dbReference>
<dbReference type="GO" id="GO:0046427">
    <property type="term" value="P:positive regulation of receptor signaling pathway via JAK-STAT"/>
    <property type="evidence" value="ECO:0007669"/>
    <property type="project" value="TreeGrafter"/>
</dbReference>
<dbReference type="GO" id="GO:0031667">
    <property type="term" value="P:response to nutrient levels"/>
    <property type="evidence" value="ECO:0007669"/>
    <property type="project" value="TreeGrafter"/>
</dbReference>
<dbReference type="CDD" id="cd10285">
    <property type="entry name" value="somatotropin_like"/>
    <property type="match status" value="1"/>
</dbReference>
<dbReference type="FunFam" id="1.20.1250.10:FF:000009">
    <property type="entry name" value="Growth hormone"/>
    <property type="match status" value="1"/>
</dbReference>
<dbReference type="Gene3D" id="1.20.1250.10">
    <property type="match status" value="1"/>
</dbReference>
<dbReference type="InterPro" id="IPR009079">
    <property type="entry name" value="4_helix_cytokine-like_core"/>
</dbReference>
<dbReference type="InterPro" id="IPR034975">
    <property type="entry name" value="Somatotropin"/>
</dbReference>
<dbReference type="InterPro" id="IPR001400">
    <property type="entry name" value="Somatotropin/Prolactin"/>
</dbReference>
<dbReference type="InterPro" id="IPR018116">
    <property type="entry name" value="Somatotropin_CS"/>
</dbReference>
<dbReference type="PANTHER" id="PTHR11417:SF2">
    <property type="entry name" value="SOMATOTROPIN"/>
    <property type="match status" value="1"/>
</dbReference>
<dbReference type="PANTHER" id="PTHR11417">
    <property type="entry name" value="SOMATOTROPIN,PROLACTIN"/>
    <property type="match status" value="1"/>
</dbReference>
<dbReference type="Pfam" id="PF00103">
    <property type="entry name" value="Hormone_1"/>
    <property type="match status" value="1"/>
</dbReference>
<dbReference type="PRINTS" id="PR00836">
    <property type="entry name" value="SOMATOTROPIN"/>
</dbReference>
<dbReference type="SUPFAM" id="SSF47266">
    <property type="entry name" value="4-helical cytokines"/>
    <property type="match status" value="1"/>
</dbReference>
<dbReference type="PROSITE" id="PS00266">
    <property type="entry name" value="SOMATOTROPIN_1"/>
    <property type="match status" value="1"/>
</dbReference>
<dbReference type="PROSITE" id="PS00338">
    <property type="entry name" value="SOMATOTROPIN_2"/>
    <property type="match status" value="1"/>
</dbReference>
<keyword id="KW-1015">Disulfide bond</keyword>
<keyword id="KW-0372">Hormone</keyword>
<keyword id="KW-0479">Metal-binding</keyword>
<keyword id="KW-1185">Reference proteome</keyword>
<keyword id="KW-0964">Secreted</keyword>
<keyword id="KW-0732">Signal</keyword>
<keyword id="KW-0862">Zinc</keyword>
<gene>
    <name type="primary">gh2</name>
</gene>
<evidence type="ECO:0000250" key="1"/>
<evidence type="ECO:0000305" key="2"/>
<protein>
    <recommendedName>
        <fullName>Somatotropin-2</fullName>
    </recommendedName>
    <alternativeName>
        <fullName>Growth hormone II</fullName>
    </alternativeName>
    <alternativeName>
        <fullName>Somatotropin II</fullName>
    </alternativeName>
</protein>